<gene>
    <name type="primary">LOX1.2</name>
    <name type="synonym">LOX1</name>
    <name type="synonym">T8</name>
</gene>
<accession>O24379</accession>
<feature type="chain" id="PRO_0000412920" description="Linoleate 9S-lipoxygenase 2">
    <location>
        <begin position="1"/>
        <end position="861"/>
    </location>
</feature>
<feature type="domain" description="PLAT" evidence="2">
    <location>
        <begin position="29"/>
        <end position="160"/>
    </location>
</feature>
<feature type="domain" description="Lipoxygenase" evidence="3">
    <location>
        <begin position="163"/>
        <end position="861"/>
    </location>
</feature>
<feature type="region of interest" description="Disordered" evidence="4">
    <location>
        <begin position="212"/>
        <end position="246"/>
    </location>
</feature>
<feature type="binding site" evidence="3">
    <location>
        <position position="522"/>
    </location>
    <ligand>
        <name>Fe cation</name>
        <dbReference type="ChEBI" id="CHEBI:24875"/>
        <note>catalytic</note>
    </ligand>
</feature>
<feature type="binding site" evidence="3">
    <location>
        <position position="527"/>
    </location>
    <ligand>
        <name>Fe cation</name>
        <dbReference type="ChEBI" id="CHEBI:24875"/>
        <note>catalytic</note>
    </ligand>
</feature>
<feature type="binding site" evidence="3">
    <location>
        <position position="713"/>
    </location>
    <ligand>
        <name>Fe cation</name>
        <dbReference type="ChEBI" id="CHEBI:24875"/>
        <note>catalytic</note>
    </ligand>
</feature>
<feature type="binding site" evidence="3">
    <location>
        <position position="717"/>
    </location>
    <ligand>
        <name>Fe cation</name>
        <dbReference type="ChEBI" id="CHEBI:24875"/>
        <note>catalytic</note>
    </ligand>
</feature>
<feature type="binding site" evidence="3">
    <location>
        <position position="861"/>
    </location>
    <ligand>
        <name>Fe cation</name>
        <dbReference type="ChEBI" id="CHEBI:24875"/>
        <note>catalytic</note>
    </ligand>
</feature>
<organism>
    <name type="scientific">Solanum tuberosum</name>
    <name type="common">Potato</name>
    <dbReference type="NCBI Taxonomy" id="4113"/>
    <lineage>
        <taxon>Eukaryota</taxon>
        <taxon>Viridiplantae</taxon>
        <taxon>Streptophyta</taxon>
        <taxon>Embryophyta</taxon>
        <taxon>Tracheophyta</taxon>
        <taxon>Spermatophyta</taxon>
        <taxon>Magnoliopsida</taxon>
        <taxon>eudicotyledons</taxon>
        <taxon>Gunneridae</taxon>
        <taxon>Pentapetalae</taxon>
        <taxon>asterids</taxon>
        <taxon>lamiids</taxon>
        <taxon>Solanales</taxon>
        <taxon>Solanaceae</taxon>
        <taxon>Solanoideae</taxon>
        <taxon>Solaneae</taxon>
        <taxon>Solanum</taxon>
    </lineage>
</organism>
<comment type="function">
    <text evidence="3 5">Plant lipoxygenases may be involved in a number of diverse aspects of plant physiology including growth and development, pest resistance, and senescence or responses to wounding. Catalyzes the hydroperoxidation of lipids containing a cis,cis-1,4-pentadiene structure. Linoleic acid is the preferred substrate, but is also active with linolenic and arachidonic acids.</text>
</comment>
<comment type="catalytic activity">
    <reaction evidence="5">
        <text>(9Z,12Z)-octadecadienoate + O2 = (9S)-hydroperoxy-(10E,12Z)-octadecadienoate</text>
        <dbReference type="Rhea" id="RHEA:30291"/>
        <dbReference type="ChEBI" id="CHEBI:15379"/>
        <dbReference type="ChEBI" id="CHEBI:30245"/>
        <dbReference type="ChEBI" id="CHEBI:60955"/>
        <dbReference type="EC" id="1.13.11.58"/>
    </reaction>
</comment>
<comment type="cofactor">
    <cofactor evidence="3">
        <name>Fe cation</name>
        <dbReference type="ChEBI" id="CHEBI:24875"/>
    </cofactor>
    <text evidence="3">Binds 1 Fe cation per subunit. Iron is tightly bound.</text>
</comment>
<comment type="biophysicochemical properties">
    <phDependence>
        <text evidence="5">Optimum pH is 6.0.</text>
    </phDependence>
</comment>
<comment type="pathway">
    <text evidence="3">Lipid metabolism; oxylipin biosynthesis.</text>
</comment>
<comment type="subunit">
    <text evidence="1">Monomer.</text>
</comment>
<comment type="subcellular location">
    <subcellularLocation>
        <location evidence="3">Cytoplasm</location>
    </subcellularLocation>
</comment>
<comment type="tissue specificity">
    <text evidence="5">Highly expressed in tubers and roots. Detected in flower buds and leaves.</text>
</comment>
<comment type="developmental stage">
    <text evidence="5">Expressed in stolons and increases during early stages of tuber development.</text>
</comment>
<comment type="induction">
    <text evidence="5">Up-regulated in roots 2 hours after jasmonate treatment and 24 hours after wounding. Not induced in the leaves.</text>
</comment>
<comment type="similarity">
    <text evidence="6">Belongs to the lipoxygenase family.</text>
</comment>
<sequence length="861" mass="97067">MIGQITSGLFGGPDDSKKLKGTVVMMNKNALDFTDLAGSLTDKAFEFLGQTVSFQLISSVQGDPTNGLQGKHSNPAYLENSLFTLTPLTAGSETAFGVTFDWNEEFGVPGAFIIKNTHINEFFLKSLTLEDVPNHGKVHFVCNSWVYPSFRYKSDRIFFVNQPYLPSKTPELLRKYRENELLTLRGDGTGKREAWDRIYDYDIYNDLGNPDEGKENVRTTLGGSAEYPYPRRGRTGRPPTRTDPKSESRIPLILSLDIYVPRDERFGHLKMSDFLTYALKSIVQFILPELHALFDGTPNEFDSFEDVLRLYEGGIKLPQGPLFKALTAAIPLEMIRELLRTDGEGILRFPTPLVIKDSKTAWRTDEEFAREMLAGVNPVIISRLQEFPPKSKLDPEAYGNQNSTITAEHIEDKLDGLTVDEAMNNNKLFILNHHDVLIPYLRRINTTTTKTYASRTLLFLQDNGSLKPLAIELSLPHPDGDQFGVTSKVYTPSDQGVESSIWQLAKAYVAVNDSGVHQLISHWLNTHAVIEPFVIATNRQLSVLHPIHKLLYPHFRDTMNINAMARQILINAGGVLESTVFQSKFAMEMSAVVYKDWVFPDQALPADLVKRGVAVEDSSSPHGVRLLIEDYPYAVDGLEIWSAIKSWVSDYCSFYYGSDEEILKDNELQAWWKELREVGHGDKKNEPWWPEMERPQELIDSCTTIIWIASALHAAVNFGQYPYAGYLPNRPTVSRRFMPEPGTPEYEELKKNPDKAFLKTITAQLQTLLGVSLIEILSRHTTDEIYLGQRESPEWTKDKEPLAAFDKFGKKLTDIEKQIIQRNGDNILTNRSGPVNAPYTLLFPTSEGGLTGKGIPNSVSI</sequence>
<dbReference type="EC" id="1.13.11.58"/>
<dbReference type="EMBL" id="X95513">
    <property type="protein sequence ID" value="CAA64766.1"/>
    <property type="molecule type" value="mRNA"/>
</dbReference>
<dbReference type="RefSeq" id="NP_001275357.1">
    <property type="nucleotide sequence ID" value="NM_001288428.1"/>
</dbReference>
<dbReference type="SMR" id="O24379"/>
<dbReference type="FunCoup" id="O24379">
    <property type="interactions" value="87"/>
</dbReference>
<dbReference type="STRING" id="4113.O24379"/>
<dbReference type="GeneID" id="102602192"/>
<dbReference type="KEGG" id="sot:102602192"/>
<dbReference type="eggNOG" id="ENOG502QVKD">
    <property type="taxonomic scope" value="Eukaryota"/>
</dbReference>
<dbReference type="InParanoid" id="O24379"/>
<dbReference type="OrthoDB" id="407298at2759"/>
<dbReference type="BioCyc" id="MetaCyc:MONOMER-12726"/>
<dbReference type="UniPathway" id="UPA00382"/>
<dbReference type="Proteomes" id="UP000011115">
    <property type="component" value="Unassembled WGS sequence"/>
</dbReference>
<dbReference type="ExpressionAtlas" id="O24379">
    <property type="expression patterns" value="baseline and differential"/>
</dbReference>
<dbReference type="GO" id="GO:0005737">
    <property type="term" value="C:cytoplasm"/>
    <property type="evidence" value="ECO:0007669"/>
    <property type="project" value="UniProtKB-SubCell"/>
</dbReference>
<dbReference type="GO" id="GO:0016165">
    <property type="term" value="F:linoleate 13S-lipoxygenase activity"/>
    <property type="evidence" value="ECO:0000314"/>
    <property type="project" value="CACAO"/>
</dbReference>
<dbReference type="GO" id="GO:1990136">
    <property type="term" value="F:linoleate 9S-lipoxygenase activity"/>
    <property type="evidence" value="ECO:0007669"/>
    <property type="project" value="UniProtKB-EC"/>
</dbReference>
<dbReference type="GO" id="GO:0046872">
    <property type="term" value="F:metal ion binding"/>
    <property type="evidence" value="ECO:0007669"/>
    <property type="project" value="UniProtKB-KW"/>
</dbReference>
<dbReference type="GO" id="GO:0016702">
    <property type="term" value="F:oxidoreductase activity, acting on single donors with incorporation of molecular oxygen, incorporation of two atoms of oxygen"/>
    <property type="evidence" value="ECO:0000318"/>
    <property type="project" value="GO_Central"/>
</dbReference>
<dbReference type="GO" id="GO:0006633">
    <property type="term" value="P:fatty acid biosynthetic process"/>
    <property type="evidence" value="ECO:0007669"/>
    <property type="project" value="UniProtKB-KW"/>
</dbReference>
<dbReference type="GO" id="GO:0034440">
    <property type="term" value="P:lipid oxidation"/>
    <property type="evidence" value="ECO:0000318"/>
    <property type="project" value="GO_Central"/>
</dbReference>
<dbReference type="GO" id="GO:0031408">
    <property type="term" value="P:oxylipin biosynthetic process"/>
    <property type="evidence" value="ECO:0007669"/>
    <property type="project" value="UniProtKB-UniPathway"/>
</dbReference>
<dbReference type="CDD" id="cd01751">
    <property type="entry name" value="PLAT_LH2"/>
    <property type="match status" value="1"/>
</dbReference>
<dbReference type="FunFam" id="1.20.245.10:FF:000002">
    <property type="entry name" value="Lipoxygenase"/>
    <property type="match status" value="1"/>
</dbReference>
<dbReference type="FunFam" id="2.60.60.20:FF:000015">
    <property type="entry name" value="Lipoxygenase"/>
    <property type="match status" value="1"/>
</dbReference>
<dbReference type="FunFam" id="3.10.450.60:FF:000002">
    <property type="entry name" value="Lipoxygenase"/>
    <property type="match status" value="1"/>
</dbReference>
<dbReference type="FunFam" id="4.10.372.10:FF:000001">
    <property type="entry name" value="Lipoxygenase"/>
    <property type="match status" value="1"/>
</dbReference>
<dbReference type="FunFam" id="4.10.375.10:FF:000001">
    <property type="entry name" value="Lipoxygenase"/>
    <property type="match status" value="1"/>
</dbReference>
<dbReference type="Gene3D" id="3.10.450.60">
    <property type="match status" value="1"/>
</dbReference>
<dbReference type="Gene3D" id="4.10.375.10">
    <property type="entry name" value="Lipoxygenase-1, Domain 2"/>
    <property type="match status" value="1"/>
</dbReference>
<dbReference type="Gene3D" id="4.10.372.10">
    <property type="entry name" value="Lipoxygenase-1, Domain 3"/>
    <property type="match status" value="1"/>
</dbReference>
<dbReference type="Gene3D" id="1.20.245.10">
    <property type="entry name" value="Lipoxygenase-1, Domain 5"/>
    <property type="match status" value="1"/>
</dbReference>
<dbReference type="Gene3D" id="2.60.60.20">
    <property type="entry name" value="PLAT/LH2 domain"/>
    <property type="match status" value="1"/>
</dbReference>
<dbReference type="InterPro" id="IPR000907">
    <property type="entry name" value="LipOase"/>
</dbReference>
<dbReference type="InterPro" id="IPR013819">
    <property type="entry name" value="LipOase_C"/>
</dbReference>
<dbReference type="InterPro" id="IPR036226">
    <property type="entry name" value="LipOase_C_sf"/>
</dbReference>
<dbReference type="InterPro" id="IPR020834">
    <property type="entry name" value="LipOase_CS"/>
</dbReference>
<dbReference type="InterPro" id="IPR020833">
    <property type="entry name" value="LipOase_Fe_BS"/>
</dbReference>
<dbReference type="InterPro" id="IPR001246">
    <property type="entry name" value="LipOase_plant"/>
</dbReference>
<dbReference type="InterPro" id="IPR042057">
    <property type="entry name" value="Lipoxy_PLAT/LH2"/>
</dbReference>
<dbReference type="InterPro" id="IPR027433">
    <property type="entry name" value="Lipoxygenase_dom_3"/>
</dbReference>
<dbReference type="InterPro" id="IPR001024">
    <property type="entry name" value="PLAT/LH2_dom"/>
</dbReference>
<dbReference type="InterPro" id="IPR036392">
    <property type="entry name" value="PLAT/LH2_dom_sf"/>
</dbReference>
<dbReference type="PANTHER" id="PTHR11771">
    <property type="entry name" value="LIPOXYGENASE"/>
    <property type="match status" value="1"/>
</dbReference>
<dbReference type="Pfam" id="PF00305">
    <property type="entry name" value="Lipoxygenase"/>
    <property type="match status" value="1"/>
</dbReference>
<dbReference type="Pfam" id="PF01477">
    <property type="entry name" value="PLAT"/>
    <property type="match status" value="1"/>
</dbReference>
<dbReference type="PRINTS" id="PR00087">
    <property type="entry name" value="LIPOXYGENASE"/>
</dbReference>
<dbReference type="PRINTS" id="PR00468">
    <property type="entry name" value="PLTLPOXGNASE"/>
</dbReference>
<dbReference type="SMART" id="SM00308">
    <property type="entry name" value="LH2"/>
    <property type="match status" value="1"/>
</dbReference>
<dbReference type="SUPFAM" id="SSF49723">
    <property type="entry name" value="Lipase/lipooxygenase domain (PLAT/LH2 domain)"/>
    <property type="match status" value="1"/>
</dbReference>
<dbReference type="SUPFAM" id="SSF48484">
    <property type="entry name" value="Lipoxigenase"/>
    <property type="match status" value="1"/>
</dbReference>
<dbReference type="PROSITE" id="PS00711">
    <property type="entry name" value="LIPOXYGENASE_1"/>
    <property type="match status" value="1"/>
</dbReference>
<dbReference type="PROSITE" id="PS00081">
    <property type="entry name" value="LIPOXYGENASE_2"/>
    <property type="match status" value="1"/>
</dbReference>
<dbReference type="PROSITE" id="PS51393">
    <property type="entry name" value="LIPOXYGENASE_3"/>
    <property type="match status" value="1"/>
</dbReference>
<dbReference type="PROSITE" id="PS50095">
    <property type="entry name" value="PLAT"/>
    <property type="match status" value="1"/>
</dbReference>
<name>LOX12_SOLTU</name>
<reference key="1">
    <citation type="journal article" date="1996" name="J. Biol. Chem.">
        <title>Characterization of three potato lipoxygenases with distinct enzymatic activities and different organ-specific and wound-regulated expression patterns.</title>
        <authorList>
            <person name="Royo J."/>
            <person name="Vancanneyt G."/>
            <person name="Perez A.G."/>
            <person name="Sanz C."/>
            <person name="Stormann K."/>
            <person name="Rosahl S."/>
            <person name="Sanchez-Serrano J.J."/>
        </authorList>
    </citation>
    <scope>NUCLEOTIDE SEQUENCE [MRNA]</scope>
    <scope>FUNCTION</scope>
    <scope>CATALYTIC ACTIVITY</scope>
    <scope>TISSUE SPECIFICITY</scope>
    <scope>DEVELOPMENTAL STAGE</scope>
    <scope>INDUCTION BY WOUNDING AND JASMONATE</scope>
    <scope>BIOPHYSICOCHEMICAL PROPERTIES</scope>
    <source>
        <strain>cv. Desiree</strain>
        <tissue>Tuber</tissue>
    </source>
</reference>
<protein>
    <recommendedName>
        <fullName>Linoleate 9S-lipoxygenase 2</fullName>
        <ecNumber>1.13.11.58</ecNumber>
    </recommendedName>
    <alternativeName>
        <fullName>Lipoxygenase 1-2</fullName>
    </alternativeName>
</protein>
<proteinExistence type="evidence at protein level"/>
<keyword id="KW-0963">Cytoplasm</keyword>
<keyword id="KW-0223">Dioxygenase</keyword>
<keyword id="KW-0275">Fatty acid biosynthesis</keyword>
<keyword id="KW-0276">Fatty acid metabolism</keyword>
<keyword id="KW-0408">Iron</keyword>
<keyword id="KW-0444">Lipid biosynthesis</keyword>
<keyword id="KW-0443">Lipid metabolism</keyword>
<keyword id="KW-0479">Metal-binding</keyword>
<keyword id="KW-0560">Oxidoreductase</keyword>
<keyword id="KW-0925">Oxylipin biosynthesis</keyword>
<keyword id="KW-1185">Reference proteome</keyword>
<evidence type="ECO:0000250" key="1"/>
<evidence type="ECO:0000255" key="2">
    <source>
        <dbReference type="PROSITE-ProRule" id="PRU00152"/>
    </source>
</evidence>
<evidence type="ECO:0000255" key="3">
    <source>
        <dbReference type="PROSITE-ProRule" id="PRU00726"/>
    </source>
</evidence>
<evidence type="ECO:0000256" key="4">
    <source>
        <dbReference type="SAM" id="MobiDB-lite"/>
    </source>
</evidence>
<evidence type="ECO:0000269" key="5">
    <source>
    </source>
</evidence>
<evidence type="ECO:0000305" key="6"/>